<reference key="1">
    <citation type="journal article" date="2003" name="J. Biol. Chem.">
        <title>A novel protein tightly bound to bacterial magnetic particles in Magnetospirillum magneticum strain AMB-1.</title>
        <authorList>
            <person name="Arakaki A."/>
            <person name="Webb J."/>
            <person name="Matsunaga T."/>
        </authorList>
    </citation>
    <scope>NUCLEOTIDE SEQUENCE [GENOMIC DNA]</scope>
    <scope>PROTEIN SEQUENCE OF 259-283</scope>
    <scope>SUBCELLULAR LOCATION</scope>
    <scope>POSSIBLE PROTEOLYSIS</scope>
    <source>
        <strain>ATCC 700264 / AMB-1</strain>
    </source>
</reference>
<reference key="2">
    <citation type="journal article" date="2005" name="DNA Res.">
        <title>Complete genome sequence of the facultative anaerobic magnetotactic bacterium Magnetospirillum sp. strain AMB-1.</title>
        <authorList>
            <person name="Matsunaga T."/>
            <person name="Okamura Y."/>
            <person name="Fukuda Y."/>
            <person name="Wahyudi A.T."/>
            <person name="Murase Y."/>
            <person name="Takeyama H."/>
        </authorList>
    </citation>
    <scope>NUCLEOTIDE SEQUENCE [LARGE SCALE GENOMIC DNA]</scope>
    <scope>SUBCELLULAR LOCATION</scope>
    <source>
        <strain>ATCC 700264 / AMB-1</strain>
    </source>
</reference>
<reference key="3">
    <citation type="journal article" date="2012" name="Mol. Microbiol.">
        <title>The magnetosome membrane protein, MmsF, is a major regulator of magnetite biomineralization in Magnetospirillum magneticum AMB-1.</title>
        <authorList>
            <person name="Murat D."/>
            <person name="Falahati V."/>
            <person name="Bertinetti L."/>
            <person name="Csencsits R."/>
            <person name="Koernig A."/>
            <person name="Downing K."/>
            <person name="Faivre D."/>
            <person name="Komeili A."/>
        </authorList>
    </citation>
    <scope>DISRUPTION PHENOTYPE</scope>
    <source>
        <strain>ATCC 700264 / AMB-1</strain>
    </source>
</reference>
<reference key="4">
    <citation type="journal article" date="2014" name="Mol. Microbiol.">
        <title>Co-ordinated functions of Mms proteins define the surface structure of cubo-octahedral magnetite crystals in magnetotactic bacteria.</title>
        <authorList>
            <person name="Arakaki A."/>
            <person name="Yamagishi A."/>
            <person name="Fukuyo A."/>
            <person name="Tanaka M."/>
            <person name="Matsunaga T."/>
        </authorList>
    </citation>
    <scope>DISRUPTION PHENOTYPE</scope>
    <source>
        <strain>ATCC 700264 / AMB-1</strain>
    </source>
</reference>
<reference key="5">
    <citation type="journal article" date="2015" name="Proc. Natl. Acad. Sci. U.S.A.">
        <title>Genetic and biochemical investigations of the role of MamP in redox control of iron biomineralization in Magnetospirillum magneticum.</title>
        <authorList>
            <person name="Jones S.R."/>
            <person name="Wilson T.D."/>
            <person name="Brown M.E."/>
            <person name="Rahn-Lee L."/>
            <person name="Yu Y."/>
            <person name="Fredriksen L.L."/>
            <person name="Ozyamak E."/>
            <person name="Komeili A."/>
            <person name="Chang M.C."/>
        </authorList>
    </citation>
    <scope>FUNCTION</scope>
    <source>
        <strain>ATCC 700264 / AMB-1</strain>
    </source>
</reference>
<reference key="6">
    <citation type="journal article" date="2016" name="Sci. Rep.">
        <title>Control of magnetite nanocrystal morphology in magnetotactic bacteria by regulation of mms7 gene expression.</title>
        <authorList>
            <person name="Yamagishi A."/>
            <person name="Tanaka M."/>
            <person name="Lenders J.J."/>
            <person name="Thiesbrummel J."/>
            <person name="Sommerdijk N.A."/>
            <person name="Matsunaga T."/>
            <person name="Arakaki A."/>
        </authorList>
    </citation>
    <scope>FUNCTION</scope>
    <scope>SUBCELLULAR LOCATION</scope>
    <scope>POSSIBLE PROTEOLYSIS</scope>
    <scope>DISRUPTION PHENOTYPE</scope>
    <scope>BIOTECHNOLOGY</scope>
    <source>
        <strain>ATCC 700264 / AMB-1</strain>
    </source>
</reference>
<reference key="7">
    <citation type="journal article" date="2018" name="Front. Microbiol.">
        <title>Understanding the biomineralization role of magnetite-interacting components (MICs) from magnetotactic bacteria.</title>
        <authorList>
            <person name="Nudelman H."/>
            <person name="Lee Y.Z."/>
            <person name="Hung Y.L."/>
            <person name="Kolusheva S."/>
            <person name="Upcher A."/>
            <person name="Chen Y.C."/>
            <person name="Chen J.Y."/>
            <person name="Sue S.C."/>
            <person name="Zarivach R."/>
        </authorList>
    </citation>
    <scope>FUNCTION</scope>
    <scope>IRON-BINDING</scope>
    <scope>DOMAIN</scope>
    <scope>MUTAGENESIS OF ASP-304 AND ASP-305</scope>
    <source>
        <strain>ATCC 700264 / AMB-1</strain>
    </source>
</reference>
<comment type="function">
    <text evidence="6 11 13">Helps regulate magnetite crystal morphology, probably in a single growth axis (PubMed:27417732). May help control oxido-reduction reactions surrounding the crystal lattice of the forming magnetite mineral (Probable). Probably binds Fe(2+), may play a role in nucleation of magnetite crystal formation (Probable). Expression in a deletion mutant restores growth of spherical (wild-type) magnetite crystals. Increased protein levels allow crystal growth in the minor axis but not increased numbers of crystals (PubMed:27417732).</text>
</comment>
<comment type="subcellular location">
    <subcellularLocation>
        <location evidence="2 3 6">Magnetosome membrane</location>
        <topology evidence="1">Single-pass membrane protein</topology>
    </subcellularLocation>
    <text evidence="2 6">Tightly associated with magnetite crystals (PubMed:12496282). Upon overexpression small amounts of a larger (full-length) protein is seen in the cell inner membrane (PubMed:27417732).</text>
</comment>
<comment type="domain">
    <text evidence="7">The isolated charged lumenal magnetite-interacting component (MIC, residues 298-314) binds Fe(2+) and Ni(2+); Ni(2+)-binding may not be physiological. Although it binds iron the protein fragment has no effect on magnetite crystal formation in an iron co-precipitation experiment, however mutating some of its residues decreases crystal size.</text>
</comment>
<comment type="PTM">
    <text evidence="6 10 12">Seen in gels as a band of about 7 kDa, suggesting it may undergo cleavage (Probable). Upon overexpression a larger (full-length) protein is seen in the cell inner membrane (PubMed:27417732).</text>
</comment>
<comment type="disruption phenotype">
    <text evidence="4 5 6">Magnetite crystals are elongated and their surface structure is altered (PubMed:24961165). Another deletion missing both mamD and a 25 kb region of the magnetsome island locus (called SID25) gives dumbbell-shaped magnetite crystals (PubMed:24961165, PubMed:27417732). Deletion of the probable mamGFDC operon leads to a slight reduction in magnetic response and slightly narrower magnetite crystals (PubMed:22716969).</text>
</comment>
<comment type="biotechnology">
    <text evidence="6">Fine-tuning of the expression of this gene allows regulation of crystal growth along the minor axis; this can be used as an alternative way to synthesize magnetic crystals with a desired shape.</text>
</comment>
<comment type="miscellaneous">
    <text evidence="9">This bacteria makes up to 20 cubo-octahedral magnetosomes of about 45 nm in diameter which contain membrane-bound crystals of magnetite (Fe(3)O(4)).</text>
</comment>
<comment type="similarity">
    <text evidence="9">Belongs to the magnetosome MamD/Mms5 family.</text>
</comment>
<organism>
    <name type="scientific">Paramagnetospirillum magneticum (strain ATCC 700264 / AMB-1)</name>
    <name type="common">Magnetospirillum magneticum</name>
    <dbReference type="NCBI Taxonomy" id="342108"/>
    <lineage>
        <taxon>Bacteria</taxon>
        <taxon>Pseudomonadati</taxon>
        <taxon>Pseudomonadota</taxon>
        <taxon>Alphaproteobacteria</taxon>
        <taxon>Rhodospirillales</taxon>
        <taxon>Magnetospirillaceae</taxon>
        <taxon>Paramagnetospirillum</taxon>
    </lineage>
</organism>
<sequence length="314" mass="29902">MQDLLLAKVESAMQASQVSALAGQTATVTKVSAATNLATITPTAAGQAPIIVKLDATRQVVELQALVGKTVMVGKTPAAIGGIGNWIALTPVTGAKAAAAATGAGQLVMMKVEGTAAAVNLPALAGKSFTIAQPPVAAGTKAAGMLYLNPVGGGDLIAINVQNAATQTGGLVGKTFVVAPSPVIGGTTGKFLVLKPLTAGAGKAVGGGAIAAKFIPAAVTGTGGAAAVGAGSASSLLTAGAGTVTPITAAGTGSAMLSAKGLGLGLGLGLGAWGPFLLGAAGLAGAAALYVWARRRHGTPDLSDDALLAAAGEE</sequence>
<name>MAMD_PARM1</name>
<feature type="chain" id="PRO_0000447793" description="Magnetosome protein MamD">
    <location>
        <begin position="1"/>
        <end position="314"/>
    </location>
</feature>
<feature type="topological domain" description="Cytoplasmic" evidence="9">
    <location>
        <begin position="1"/>
        <end position="263"/>
    </location>
</feature>
<feature type="transmembrane region" description="Helical" evidence="1">
    <location>
        <begin position="264"/>
        <end position="284"/>
    </location>
</feature>
<feature type="topological domain" description="Lumenal" evidence="13">
    <location>
        <begin position="285"/>
        <end position="314"/>
    </location>
</feature>
<feature type="region of interest" description="GL repeat" evidence="9">
    <location>
        <begin position="261"/>
        <end position="270"/>
    </location>
</feature>
<feature type="region of interest" description="Magnetite-interacting component (MIC), binds Fe(2+)" evidence="7">
    <location>
        <begin position="298"/>
        <end position="314"/>
    </location>
</feature>
<feature type="mutagenesis site" description="Isolated MIC makes smaller magnetite crystals." evidence="7">
    <original>D</original>
    <variation>A</variation>
    <location>
        <position position="304"/>
    </location>
</feature>
<feature type="mutagenesis site" description="Isolated MIC makes smaller magnetite crystals." evidence="7">
    <original>D</original>
    <variation>A</variation>
    <location>
        <position position="305"/>
    </location>
</feature>
<protein>
    <recommendedName>
        <fullName evidence="9">Magnetosome protein MamD</fullName>
    </recommendedName>
    <alternativeName>
        <fullName evidence="8">Magnetosome protein Mms7</fullName>
    </alternativeName>
</protein>
<evidence type="ECO:0000255" key="1"/>
<evidence type="ECO:0000269" key="2">
    <source>
    </source>
</evidence>
<evidence type="ECO:0000269" key="3">
    <source>
    </source>
</evidence>
<evidence type="ECO:0000269" key="4">
    <source>
    </source>
</evidence>
<evidence type="ECO:0000269" key="5">
    <source>
    </source>
</evidence>
<evidence type="ECO:0000269" key="6">
    <source>
    </source>
</evidence>
<evidence type="ECO:0000269" key="7">
    <source>
    </source>
</evidence>
<evidence type="ECO:0000303" key="8">
    <source>
    </source>
</evidence>
<evidence type="ECO:0000305" key="9"/>
<evidence type="ECO:0000305" key="10">
    <source>
    </source>
</evidence>
<evidence type="ECO:0000305" key="11">
    <source>
    </source>
</evidence>
<evidence type="ECO:0000305" key="12">
    <source>
    </source>
</evidence>
<evidence type="ECO:0000305" key="13">
    <source>
    </source>
</evidence>
<keyword id="KW-0091">Biomineralization</keyword>
<keyword id="KW-0903">Direct protein sequencing</keyword>
<keyword id="KW-0408">Iron</keyword>
<keyword id="KW-1281">Magnetosome</keyword>
<keyword id="KW-0472">Membrane</keyword>
<keyword id="KW-0479">Metal-binding</keyword>
<keyword id="KW-0812">Transmembrane</keyword>
<keyword id="KW-1133">Transmembrane helix</keyword>
<gene>
    <name type="primary">mamD</name>
    <name evidence="8" type="synonym">mms7</name>
    <name type="ordered locus">amb0952</name>
</gene>
<proteinExistence type="evidence at protein level"/>
<dbReference type="EMBL" id="AB096081">
    <property type="protein sequence ID" value="BAC65161.1"/>
    <property type="molecule type" value="Genomic_DNA"/>
</dbReference>
<dbReference type="EMBL" id="AP007255">
    <property type="protein sequence ID" value="BAE49756.1"/>
    <property type="molecule type" value="Genomic_DNA"/>
</dbReference>
<dbReference type="RefSeq" id="WP_011383389.1">
    <property type="nucleotide sequence ID" value="NC_007626.1"/>
</dbReference>
<dbReference type="STRING" id="342108.amb0952"/>
<dbReference type="KEGG" id="mag:amb0952"/>
<dbReference type="HOGENOM" id="CLU_815860_0_0_5"/>
<dbReference type="Proteomes" id="UP000007058">
    <property type="component" value="Chromosome"/>
</dbReference>
<dbReference type="GO" id="GO:0110146">
    <property type="term" value="C:magnetosome membrane"/>
    <property type="evidence" value="ECO:0000314"/>
    <property type="project" value="UniProtKB"/>
</dbReference>
<dbReference type="GO" id="GO:0046872">
    <property type="term" value="F:metal ion binding"/>
    <property type="evidence" value="ECO:0007669"/>
    <property type="project" value="UniProtKB-KW"/>
</dbReference>
<dbReference type="InterPro" id="IPR053512">
    <property type="entry name" value="Magnetosome_regulatory"/>
</dbReference>
<dbReference type="NCBIfam" id="NF040916">
    <property type="entry name" value="MamD"/>
    <property type="match status" value="1"/>
</dbReference>
<accession>Q2W8R9</accession>
<accession>Q83VL8</accession>